<accession>Q5BJM7</accession>
<gene>
    <name type="primary">Cdc42se1</name>
</gene>
<proteinExistence type="inferred from homology"/>
<reference key="1">
    <citation type="journal article" date="2004" name="Genome Res.">
        <title>The status, quality, and expansion of the NIH full-length cDNA project: the Mammalian Gene Collection (MGC).</title>
        <authorList>
            <consortium name="The MGC Project Team"/>
        </authorList>
    </citation>
    <scope>NUCLEOTIDE SEQUENCE [LARGE SCALE MRNA]</scope>
    <source>
        <tissue>Spleen</tissue>
    </source>
</reference>
<evidence type="ECO:0000250" key="1"/>
<evidence type="ECO:0000255" key="2">
    <source>
        <dbReference type="PROSITE-ProRule" id="PRU00057"/>
    </source>
</evidence>
<evidence type="ECO:0000256" key="3">
    <source>
        <dbReference type="SAM" id="MobiDB-lite"/>
    </source>
</evidence>
<evidence type="ECO:0000305" key="4"/>
<name>C42S1_RAT</name>
<keyword id="KW-1003">Cell membrane</keyword>
<keyword id="KW-0133">Cell shape</keyword>
<keyword id="KW-0963">Cytoplasm</keyword>
<keyword id="KW-0206">Cytoskeleton</keyword>
<keyword id="KW-0449">Lipoprotein</keyword>
<keyword id="KW-0472">Membrane</keyword>
<keyword id="KW-0564">Palmitate</keyword>
<keyword id="KW-0581">Phagocytosis</keyword>
<keyword id="KW-1185">Reference proteome</keyword>
<dbReference type="EMBL" id="BC091418">
    <property type="protein sequence ID" value="AAH91418.1"/>
    <property type="molecule type" value="mRNA"/>
</dbReference>
<dbReference type="RefSeq" id="NP_001034133.1">
    <property type="nucleotide sequence ID" value="NM_001039044.1"/>
</dbReference>
<dbReference type="FunCoup" id="Q5BJM7">
    <property type="interactions" value="407"/>
</dbReference>
<dbReference type="STRING" id="10116.ENSRNOP00000072987"/>
<dbReference type="PhosphoSitePlus" id="Q5BJM7"/>
<dbReference type="PaxDb" id="10116-ENSRNOP00000034839"/>
<dbReference type="GeneID" id="499672"/>
<dbReference type="KEGG" id="rno:499672"/>
<dbReference type="UCSC" id="RGD:1561700">
    <property type="organism name" value="rat"/>
</dbReference>
<dbReference type="AGR" id="RGD:1561700"/>
<dbReference type="CTD" id="56882"/>
<dbReference type="RGD" id="1561700">
    <property type="gene designation" value="Cdc42se1"/>
</dbReference>
<dbReference type="eggNOG" id="ENOG502S499">
    <property type="taxonomic scope" value="Eukaryota"/>
</dbReference>
<dbReference type="HOGENOM" id="CLU_173417_1_0_1"/>
<dbReference type="InParanoid" id="Q5BJM7"/>
<dbReference type="OrthoDB" id="5559822at2759"/>
<dbReference type="PhylomeDB" id="Q5BJM7"/>
<dbReference type="TreeFam" id="TF323815"/>
<dbReference type="PRO" id="PR:Q5BJM7"/>
<dbReference type="Proteomes" id="UP000002494">
    <property type="component" value="Chromosome 2"/>
</dbReference>
<dbReference type="Bgee" id="ENSRNOG00000060538">
    <property type="expression patterns" value="Expressed in spleen and 20 other cell types or tissues"/>
</dbReference>
<dbReference type="GO" id="GO:0030054">
    <property type="term" value="C:cell junction"/>
    <property type="evidence" value="ECO:0007669"/>
    <property type="project" value="Ensembl"/>
</dbReference>
<dbReference type="GO" id="GO:0005737">
    <property type="term" value="C:cytoplasm"/>
    <property type="evidence" value="ECO:0007669"/>
    <property type="project" value="UniProtKB-KW"/>
</dbReference>
<dbReference type="GO" id="GO:0005856">
    <property type="term" value="C:cytoskeleton"/>
    <property type="evidence" value="ECO:0007669"/>
    <property type="project" value="UniProtKB-SubCell"/>
</dbReference>
<dbReference type="GO" id="GO:0005886">
    <property type="term" value="C:plasma membrane"/>
    <property type="evidence" value="ECO:0000318"/>
    <property type="project" value="GO_Central"/>
</dbReference>
<dbReference type="GO" id="GO:0031267">
    <property type="term" value="F:small GTPase binding"/>
    <property type="evidence" value="ECO:0007669"/>
    <property type="project" value="InterPro"/>
</dbReference>
<dbReference type="GO" id="GO:0006909">
    <property type="term" value="P:phagocytosis"/>
    <property type="evidence" value="ECO:0007669"/>
    <property type="project" value="UniProtKB-KW"/>
</dbReference>
<dbReference type="GO" id="GO:0008360">
    <property type="term" value="P:regulation of cell shape"/>
    <property type="evidence" value="ECO:0007669"/>
    <property type="project" value="UniProtKB-KW"/>
</dbReference>
<dbReference type="GO" id="GO:0035023">
    <property type="term" value="P:regulation of Rho protein signal transduction"/>
    <property type="evidence" value="ECO:0007669"/>
    <property type="project" value="InterPro"/>
</dbReference>
<dbReference type="FunFam" id="3.90.810.10:FF:000015">
    <property type="entry name" value="CDC42 small effector protein 1"/>
    <property type="match status" value="1"/>
</dbReference>
<dbReference type="Gene3D" id="3.90.810.10">
    <property type="entry name" value="CRIB domain"/>
    <property type="match status" value="1"/>
</dbReference>
<dbReference type="InterPro" id="IPR000095">
    <property type="entry name" value="CRIB_dom"/>
</dbReference>
<dbReference type="InterPro" id="IPR036936">
    <property type="entry name" value="CRIB_dom_sf"/>
</dbReference>
<dbReference type="InterPro" id="IPR039056">
    <property type="entry name" value="SPEC"/>
</dbReference>
<dbReference type="PANTHER" id="PTHR13502:SF3">
    <property type="entry name" value="CDC42 SMALL EFFECTOR PROTEIN 1"/>
    <property type="match status" value="1"/>
</dbReference>
<dbReference type="PANTHER" id="PTHR13502">
    <property type="entry name" value="CDC42 SMALL EFFECTOR PROTEIN HOMOLOG"/>
    <property type="match status" value="1"/>
</dbReference>
<dbReference type="PROSITE" id="PS50108">
    <property type="entry name" value="CRIB"/>
    <property type="match status" value="1"/>
</dbReference>
<protein>
    <recommendedName>
        <fullName>CDC42 small effector protein 1</fullName>
    </recommendedName>
</protein>
<organism>
    <name type="scientific">Rattus norvegicus</name>
    <name type="common">Rat</name>
    <dbReference type="NCBI Taxonomy" id="10116"/>
    <lineage>
        <taxon>Eukaryota</taxon>
        <taxon>Metazoa</taxon>
        <taxon>Chordata</taxon>
        <taxon>Craniata</taxon>
        <taxon>Vertebrata</taxon>
        <taxon>Euteleostomi</taxon>
        <taxon>Mammalia</taxon>
        <taxon>Eutheria</taxon>
        <taxon>Euarchontoglires</taxon>
        <taxon>Glires</taxon>
        <taxon>Rodentia</taxon>
        <taxon>Myomorpha</taxon>
        <taxon>Muroidea</taxon>
        <taxon>Muridae</taxon>
        <taxon>Murinae</taxon>
        <taxon>Rattus</taxon>
    </lineage>
</organism>
<sequence>MSEFWHKLGCCVVEKPQPKKRRRRIDRTMIGEPMNFVHLTHIGSGEMGAGDGLAMTGAVQEQMRSKGNRDRPWSNSRAL</sequence>
<feature type="chain" id="PRO_0000334632" description="CDC42 small effector protein 1">
    <location>
        <begin position="1"/>
        <end position="79"/>
    </location>
</feature>
<feature type="domain" description="CRIB" evidence="2">
    <location>
        <begin position="30"/>
        <end position="43"/>
    </location>
</feature>
<feature type="region of interest" description="Disordered" evidence="3">
    <location>
        <begin position="48"/>
        <end position="79"/>
    </location>
</feature>
<feature type="compositionally biased region" description="Basic and acidic residues" evidence="3">
    <location>
        <begin position="63"/>
        <end position="72"/>
    </location>
</feature>
<feature type="lipid moiety-binding region" description="S-palmitoyl cysteine" evidence="1">
    <location>
        <position position="10"/>
    </location>
</feature>
<feature type="lipid moiety-binding region" description="S-palmitoyl cysteine" evidence="1">
    <location>
        <position position="11"/>
    </location>
</feature>
<comment type="function">
    <text evidence="1">Probably involved in the organization of the actin cytoskeleton by acting downstream of CDC42, inducing actin filament assembly. Alters CDC42-induced cell shape changes. In activated T-cells, may play a role in CDC42-mediated F-actin accumulation at the immunological synapse. May play a role in early contractile events in phagocytosis in macrophages (By similarity).</text>
</comment>
<comment type="subunit">
    <text evidence="1">Interacts with CDC42 (in GTP-bound form). Interacts weakly with RAC1 and not at all with RHOA (By similarity).</text>
</comment>
<comment type="subcellular location">
    <subcellularLocation>
        <location evidence="1">Cytoplasm</location>
        <location evidence="1">Cytoskeleton</location>
    </subcellularLocation>
    <subcellularLocation>
        <location evidence="1">Cell membrane</location>
        <topology evidence="1">Lipid-anchor</topology>
    </subcellularLocation>
</comment>
<comment type="domain">
    <text evidence="1">The CRIB domain mediates interaction with CDC42.</text>
</comment>
<comment type="similarity">
    <text evidence="4">Belongs to the CDC42SE/SPEC family.</text>
</comment>